<comment type="function">
    <text>Destroys superoxide anion radicals which are normally produced within the cells and which are toxic to biological systems.</text>
</comment>
<comment type="catalytic activity">
    <reaction>
        <text>2 superoxide + 2 H(+) = H2O2 + O2</text>
        <dbReference type="Rhea" id="RHEA:20696"/>
        <dbReference type="ChEBI" id="CHEBI:15378"/>
        <dbReference type="ChEBI" id="CHEBI:15379"/>
        <dbReference type="ChEBI" id="CHEBI:16240"/>
        <dbReference type="ChEBI" id="CHEBI:18421"/>
        <dbReference type="EC" id="1.15.1.1"/>
    </reaction>
</comment>
<comment type="cofactor">
    <cofactor evidence="1">
        <name>Fe cation</name>
        <dbReference type="ChEBI" id="CHEBI:24875"/>
    </cofactor>
    <text evidence="1">Binds 1 Fe cation per subunit.</text>
</comment>
<comment type="subunit">
    <text evidence="1">Homodimer.</text>
</comment>
<comment type="subcellular location">
    <subcellularLocation>
        <location>Periplasm</location>
    </subcellularLocation>
</comment>
<comment type="similarity">
    <text evidence="2">Belongs to the iron/manganese superoxide dismutase family.</text>
</comment>
<dbReference type="EC" id="1.15.1.1"/>
<dbReference type="BRENDA" id="1.15.1.1">
    <property type="organism ID" value="14543"/>
</dbReference>
<dbReference type="GO" id="GO:0042597">
    <property type="term" value="C:periplasmic space"/>
    <property type="evidence" value="ECO:0007669"/>
    <property type="project" value="UniProtKB-SubCell"/>
</dbReference>
<dbReference type="GO" id="GO:0046872">
    <property type="term" value="F:metal ion binding"/>
    <property type="evidence" value="ECO:0007669"/>
    <property type="project" value="UniProtKB-KW"/>
</dbReference>
<dbReference type="GO" id="GO:0004784">
    <property type="term" value="F:superoxide dismutase activity"/>
    <property type="evidence" value="ECO:0007669"/>
    <property type="project" value="UniProtKB-EC"/>
</dbReference>
<dbReference type="InterPro" id="IPR019831">
    <property type="entry name" value="Mn/Fe_SOD_N"/>
</dbReference>
<dbReference type="InterPro" id="IPR036324">
    <property type="entry name" value="Mn/Fe_SOD_N_sf"/>
</dbReference>
<dbReference type="Pfam" id="PF00081">
    <property type="entry name" value="Sod_Fe_N"/>
    <property type="match status" value="1"/>
</dbReference>
<dbReference type="SUPFAM" id="SSF46609">
    <property type="entry name" value="Fe,Mn superoxide dismutase (SOD), N-terminal domain"/>
    <property type="match status" value="1"/>
</dbReference>
<gene>
    <name type="primary">sodB</name>
</gene>
<reference key="1">
    <citation type="journal article" date="1999" name="Microbiology">
        <title>Superoxide dismutase and catalase in Photobacterium damselae subsp. piscicida and their roles in resistance to reactive oxygen species.</title>
        <authorList>
            <person name="Barnes A.C."/>
            <person name="Balebona M.C."/>
            <person name="Horne M.T."/>
            <person name="Ellis A.E."/>
        </authorList>
    </citation>
    <scope>PROTEIN SEQUENCE</scope>
    <source>
        <strain>MT1415</strain>
    </source>
</reference>
<keyword id="KW-0903">Direct protein sequencing</keyword>
<keyword id="KW-0408">Iron</keyword>
<keyword id="KW-0479">Metal-binding</keyword>
<keyword id="KW-0560">Oxidoreductase</keyword>
<keyword id="KW-0574">Periplasm</keyword>
<feature type="chain" id="PRO_0000159991" description="Superoxide dismutase [Fe]">
    <location>
        <begin position="1"/>
        <end position="20" status="greater than"/>
    </location>
</feature>
<feature type="non-terminal residue">
    <location>
        <position position="20"/>
    </location>
</feature>
<sequence>AFELPALPYAKDALEPHISA</sequence>
<evidence type="ECO:0000250" key="1"/>
<evidence type="ECO:0000305" key="2"/>
<accession>P81527</accession>
<organism>
    <name type="scientific">Photobacterium damsela subsp. piscicida</name>
    <name type="common">Pasteurella piscicida</name>
    <dbReference type="NCBI Taxonomy" id="38294"/>
    <lineage>
        <taxon>Bacteria</taxon>
        <taxon>Pseudomonadati</taxon>
        <taxon>Pseudomonadota</taxon>
        <taxon>Gammaproteobacteria</taxon>
        <taxon>Vibrionales</taxon>
        <taxon>Vibrionaceae</taxon>
        <taxon>Photobacterium</taxon>
    </lineage>
</organism>
<name>SODF_PHODP</name>
<proteinExistence type="evidence at protein level"/>
<protein>
    <recommendedName>
        <fullName>Superoxide dismutase [Fe]</fullName>
        <ecNumber>1.15.1.1</ecNumber>
    </recommendedName>
</protein>